<comment type="function">
    <text evidence="1 6">Core subunit of the mitochondrial membrane respiratory chain NADH dehydrogenase (Complex I) which catalyzes electron transfer from NADH through the respiratory chain, using ubiquinone as an electron acceptor (PubMed:38575788). Essential for the catalytic activity and assembly of complex I (By similarity).</text>
</comment>
<comment type="catalytic activity">
    <reaction evidence="1">
        <text>a ubiquinone + NADH + 5 H(+)(in) = a ubiquinol + NAD(+) + 4 H(+)(out)</text>
        <dbReference type="Rhea" id="RHEA:29091"/>
        <dbReference type="Rhea" id="RHEA-COMP:9565"/>
        <dbReference type="Rhea" id="RHEA-COMP:9566"/>
        <dbReference type="ChEBI" id="CHEBI:15378"/>
        <dbReference type="ChEBI" id="CHEBI:16389"/>
        <dbReference type="ChEBI" id="CHEBI:17976"/>
        <dbReference type="ChEBI" id="CHEBI:57540"/>
        <dbReference type="ChEBI" id="CHEBI:57945"/>
        <dbReference type="EC" id="7.1.1.2"/>
    </reaction>
</comment>
<comment type="cofactor">
    <cofactor evidence="6">
        <name>[4Fe-4S] cluster</name>
        <dbReference type="ChEBI" id="CHEBI:49883"/>
    </cofactor>
    <text evidence="6">Binds 2 [4Fe-4S] cluster.</text>
</comment>
<comment type="subunit">
    <text evidence="2 5 6">Complex I is composed of 45 different subunits (PubMed:38575788). This is a component of the iron-sulfur (IP) fragment of the enzyme (PubMed:38575788). Interacts with RAB5IF (PubMed:31536960).</text>
</comment>
<comment type="subcellular location">
    <subcellularLocation>
        <location evidence="6">Mitochondrion inner membrane</location>
        <topology evidence="6">Peripheral membrane protein</topology>
        <orientation evidence="6">Matrix side</orientation>
    </subcellularLocation>
</comment>
<comment type="similarity">
    <text evidence="7">Belongs to the complex I 23 kDa subunit family.</text>
</comment>
<reference key="1">
    <citation type="submission" date="2002-04" db="EMBL/GenBank/DDBJ databases">
        <title>Genomic organization of the mouse NDUFS8 gene encoding the NADH dehydrogenase:ubiquinone Fe-S protein 8.</title>
        <authorList>
            <person name="Lucas-Teixeira V.A."/>
            <person name="Marques S."/>
            <person name="Belo J.A."/>
        </authorList>
    </citation>
    <scope>NUCLEOTIDE SEQUENCE [GENOMIC DNA]</scope>
</reference>
<reference key="2">
    <citation type="submission" date="2007-04" db="UniProtKB">
        <authorList>
            <person name="Lubec G."/>
            <person name="Kang S.U."/>
        </authorList>
    </citation>
    <scope>PROTEIN SEQUENCE OF 19-37; 60-90 AND 118-135</scope>
    <scope>IDENTIFICATION BY MASS SPECTROMETRY</scope>
    <source>
        <strain>C57BL/6J</strain>
        <tissue>Brain</tissue>
    </source>
</reference>
<reference key="3">
    <citation type="journal article" date="2006" name="Mol. Cell. Proteomics">
        <title>Comprehensive identification of phosphorylation sites in postsynaptic density preparations.</title>
        <authorList>
            <person name="Trinidad J.C."/>
            <person name="Specht C.G."/>
            <person name="Thalhammer A."/>
            <person name="Schoepfer R."/>
            <person name="Burlingame A.L."/>
        </authorList>
    </citation>
    <scope>IDENTIFICATION BY MASS SPECTROMETRY [LARGE SCALE ANALYSIS]</scope>
    <source>
        <tissue>Brain</tissue>
    </source>
</reference>
<reference key="4">
    <citation type="journal article" date="2010" name="Cell">
        <title>A tissue-specific atlas of mouse protein phosphorylation and expression.</title>
        <authorList>
            <person name="Huttlin E.L."/>
            <person name="Jedrychowski M.P."/>
            <person name="Elias J.E."/>
            <person name="Goswami T."/>
            <person name="Rad R."/>
            <person name="Beausoleil S.A."/>
            <person name="Villen J."/>
            <person name="Haas W."/>
            <person name="Sowa M.E."/>
            <person name="Gygi S.P."/>
        </authorList>
    </citation>
    <scope>IDENTIFICATION BY MASS SPECTROMETRY [LARGE SCALE ANALYSIS]</scope>
    <source>
        <tissue>Brain</tissue>
        <tissue>Brown adipose tissue</tissue>
        <tissue>Heart</tissue>
        <tissue>Kidney</tissue>
        <tissue>Liver</tissue>
        <tissue>Lung</tissue>
        <tissue>Pancreas</tissue>
        <tissue>Spleen</tissue>
        <tissue>Testis</tissue>
    </source>
</reference>
<reference key="5">
    <citation type="journal article" date="2019" name="IScience">
        <title>Rewiring of the Human Mitochondrial Interactome during Neuronal Reprogramming Reveals Regulators of the Respirasome and Neurogenesis.</title>
        <authorList>
            <person name="Moutaoufik M.T."/>
            <person name="Malty R."/>
            <person name="Amin S."/>
            <person name="Zhang Q."/>
            <person name="Phanse S."/>
            <person name="Gagarinova A."/>
            <person name="Zilocchi M."/>
            <person name="Hoell L."/>
            <person name="Minic Z."/>
            <person name="Gagarinova M."/>
            <person name="Aoki H."/>
            <person name="Stockwell J."/>
            <person name="Jessulat M."/>
            <person name="Goebels F."/>
            <person name="Broderick K."/>
            <person name="Scott N.E."/>
            <person name="Vlasblom J."/>
            <person name="Musso G."/>
            <person name="Prasad B."/>
            <person name="Lamantea E."/>
            <person name="Garavaglia B."/>
            <person name="Rajput A."/>
            <person name="Murayama K."/>
            <person name="Okazaki Y."/>
            <person name="Foster L.J."/>
            <person name="Bader G.D."/>
            <person name="Cayabyab F.S."/>
            <person name="Babu M."/>
        </authorList>
    </citation>
    <scope>INTERACTION WITH RAB5IF</scope>
</reference>
<reference evidence="8" key="6">
    <citation type="journal article" date="2024" name="Nat. Struct. Mol. Biol.">
        <title>SCAF1 drives the compositional diversity of mammalian respirasomes.</title>
        <authorList>
            <person name="Vercellino I."/>
            <person name="Sazanov L.A."/>
        </authorList>
    </citation>
    <scope>STRUCTURE BY ELECTRON MICROSCOPY (3.60 ANGSTROMS) IN COMPLEX WITH MITOCHONDRIAL RESPIRATORY SUPERCOMPLEX</scope>
    <scope>FUNCTION</scope>
    <scope>SUBCELLULAR LOCATION</scope>
    <scope>SUBUNIT</scope>
</reference>
<sequence>MYRLSSSMLPRALAQAMRTGHLNGQSLHSSAVAATYKYVNKKEQESEVDMKSATDNAARILMWTELIRGLGMTLSYLFREPATINYPFEKGPLSPRFRGEHALRRYPSGEERCIACKLCEAICPAQAITIEAEPRADGSRRTTRYDIDMTKCIYCGFCQEACPVDAIVEGPNFEFSTETHEELLYNKEKLLNNGDKWEAEIAANIQADYLYR</sequence>
<keyword id="KW-0002">3D-structure</keyword>
<keyword id="KW-0004">4Fe-4S</keyword>
<keyword id="KW-0903">Direct protein sequencing</keyword>
<keyword id="KW-0249">Electron transport</keyword>
<keyword id="KW-0408">Iron</keyword>
<keyword id="KW-0411">Iron-sulfur</keyword>
<keyword id="KW-0472">Membrane</keyword>
<keyword id="KW-0479">Metal-binding</keyword>
<keyword id="KW-0496">Mitochondrion</keyword>
<keyword id="KW-0999">Mitochondrion inner membrane</keyword>
<keyword id="KW-0520">NAD</keyword>
<keyword id="KW-0560">Oxidoreductase</keyword>
<keyword id="KW-1185">Reference proteome</keyword>
<keyword id="KW-0677">Repeat</keyword>
<keyword id="KW-0679">Respiratory chain</keyword>
<keyword id="KW-0809">Transit peptide</keyword>
<keyword id="KW-1278">Translocase</keyword>
<keyword id="KW-0813">Transport</keyword>
<keyword id="KW-0830">Ubiquinone</keyword>
<feature type="transit peptide" description="Mitochondrion" evidence="3">
    <location>
        <begin position="1"/>
        <end position="34"/>
    </location>
</feature>
<feature type="chain" id="PRO_0000020014" description="NADH dehydrogenase [ubiquinone] iron-sulfur protein 8, mitochondrial">
    <location>
        <begin position="35"/>
        <end position="212"/>
    </location>
</feature>
<feature type="domain" description="4Fe-4S ferredoxin-type 1" evidence="4 6">
    <location>
        <begin position="104"/>
        <end position="133"/>
    </location>
</feature>
<feature type="domain" description="4Fe-4S ferredoxin-type 2" evidence="4 6">
    <location>
        <begin position="143"/>
        <end position="172"/>
    </location>
</feature>
<feature type="binding site" evidence="4 6">
    <location>
        <position position="113"/>
    </location>
    <ligand>
        <name>[4Fe-4S] cluster</name>
        <dbReference type="ChEBI" id="CHEBI:49883"/>
        <label>1</label>
    </ligand>
</feature>
<feature type="binding site" evidence="4 6">
    <location>
        <position position="116"/>
    </location>
    <ligand>
        <name>[4Fe-4S] cluster</name>
        <dbReference type="ChEBI" id="CHEBI:49883"/>
        <label>1</label>
    </ligand>
</feature>
<feature type="binding site" evidence="4 6">
    <location>
        <position position="119"/>
    </location>
    <ligand>
        <name>[4Fe-4S] cluster</name>
        <dbReference type="ChEBI" id="CHEBI:49883"/>
        <label>1</label>
    </ligand>
</feature>
<feature type="binding site" evidence="4 6">
    <location>
        <position position="123"/>
    </location>
    <ligand>
        <name>[4Fe-4S] cluster</name>
        <dbReference type="ChEBI" id="CHEBI:49883"/>
        <label>2</label>
    </ligand>
</feature>
<feature type="binding site" evidence="4 6">
    <location>
        <position position="152"/>
    </location>
    <ligand>
        <name>[4Fe-4S] cluster</name>
        <dbReference type="ChEBI" id="CHEBI:49883"/>
        <label>2</label>
    </ligand>
</feature>
<feature type="binding site" evidence="4 6">
    <location>
        <position position="155"/>
    </location>
    <ligand>
        <name>[4Fe-4S] cluster</name>
        <dbReference type="ChEBI" id="CHEBI:49883"/>
        <label>2</label>
    </ligand>
</feature>
<feature type="binding site" evidence="4 6">
    <location>
        <position position="158"/>
    </location>
    <ligand>
        <name>[4Fe-4S] cluster</name>
        <dbReference type="ChEBI" id="CHEBI:49883"/>
        <label>2</label>
    </ligand>
</feature>
<feature type="binding site" evidence="4 6">
    <location>
        <position position="162"/>
    </location>
    <ligand>
        <name>[4Fe-4S] cluster</name>
        <dbReference type="ChEBI" id="CHEBI:49883"/>
        <label>1</label>
    </ligand>
</feature>
<feature type="strand" evidence="12">
    <location>
        <begin position="36"/>
        <end position="40"/>
    </location>
</feature>
<feature type="helix" evidence="12">
    <location>
        <begin position="50"/>
        <end position="62"/>
    </location>
</feature>
<feature type="helix" evidence="12">
    <location>
        <begin position="64"/>
        <end position="77"/>
    </location>
</feature>
<feature type="turn" evidence="12">
    <location>
        <begin position="86"/>
        <end position="88"/>
    </location>
</feature>
<feature type="strand" evidence="12">
    <location>
        <begin position="100"/>
        <end position="103"/>
    </location>
</feature>
<feature type="strand" evidence="9">
    <location>
        <begin position="107"/>
        <end position="109"/>
    </location>
</feature>
<feature type="helix" evidence="12">
    <location>
        <begin position="118"/>
        <end position="122"/>
    </location>
</feature>
<feature type="strand" evidence="12">
    <location>
        <begin position="128"/>
        <end position="134"/>
    </location>
</feature>
<feature type="strand" evidence="10">
    <location>
        <begin position="136"/>
        <end position="138"/>
    </location>
</feature>
<feature type="strand" evidence="12">
    <location>
        <begin position="140"/>
        <end position="148"/>
    </location>
</feature>
<feature type="turn" evidence="12">
    <location>
        <begin position="149"/>
        <end position="151"/>
    </location>
</feature>
<feature type="helix" evidence="12">
    <location>
        <begin position="157"/>
        <end position="161"/>
    </location>
</feature>
<feature type="strand" evidence="12">
    <location>
        <begin position="167"/>
        <end position="169"/>
    </location>
</feature>
<feature type="strand" evidence="12">
    <location>
        <begin position="177"/>
        <end position="180"/>
    </location>
</feature>
<feature type="helix" evidence="12">
    <location>
        <begin position="181"/>
        <end position="183"/>
    </location>
</feature>
<feature type="strand" evidence="11">
    <location>
        <begin position="184"/>
        <end position="186"/>
    </location>
</feature>
<feature type="helix" evidence="12">
    <location>
        <begin position="187"/>
        <end position="208"/>
    </location>
</feature>
<feature type="helix" evidence="12">
    <location>
        <begin position="209"/>
        <end position="211"/>
    </location>
</feature>
<organism>
    <name type="scientific">Mus musculus</name>
    <name type="common">Mouse</name>
    <dbReference type="NCBI Taxonomy" id="10090"/>
    <lineage>
        <taxon>Eukaryota</taxon>
        <taxon>Metazoa</taxon>
        <taxon>Chordata</taxon>
        <taxon>Craniata</taxon>
        <taxon>Vertebrata</taxon>
        <taxon>Euteleostomi</taxon>
        <taxon>Mammalia</taxon>
        <taxon>Eutheria</taxon>
        <taxon>Euarchontoglires</taxon>
        <taxon>Glires</taxon>
        <taxon>Rodentia</taxon>
        <taxon>Myomorpha</taxon>
        <taxon>Muroidea</taxon>
        <taxon>Muridae</taxon>
        <taxon>Murinae</taxon>
        <taxon>Mus</taxon>
        <taxon>Mus</taxon>
    </lineage>
</organism>
<dbReference type="EC" id="7.1.1.2" evidence="1"/>
<dbReference type="EMBL" id="AY096002">
    <property type="protein sequence ID" value="AAM34451.1"/>
    <property type="molecule type" value="Genomic_DNA"/>
</dbReference>
<dbReference type="CCDS" id="CCDS29402.1"/>
<dbReference type="PIR" id="PC7079">
    <property type="entry name" value="PC7079"/>
</dbReference>
<dbReference type="RefSeq" id="NP_001258372.1">
    <property type="nucleotide sequence ID" value="NM_001271443.1"/>
</dbReference>
<dbReference type="RefSeq" id="NP_001258373.1">
    <property type="nucleotide sequence ID" value="NM_001271444.1"/>
</dbReference>
<dbReference type="RefSeq" id="NP_659119.2">
    <property type="nucleotide sequence ID" value="NM_144870.5"/>
</dbReference>
<dbReference type="PDB" id="6G2J">
    <property type="method" value="EM"/>
    <property type="resolution" value="3.30 A"/>
    <property type="chains" value="I=1-212"/>
</dbReference>
<dbReference type="PDB" id="6G72">
    <property type="method" value="EM"/>
    <property type="resolution" value="3.90 A"/>
    <property type="chains" value="I=1-212"/>
</dbReference>
<dbReference type="PDB" id="6ZR2">
    <property type="method" value="EM"/>
    <property type="resolution" value="3.10 A"/>
    <property type="chains" value="I=1-212"/>
</dbReference>
<dbReference type="PDB" id="6ZTQ">
    <property type="method" value="EM"/>
    <property type="resolution" value="3.00 A"/>
    <property type="chains" value="I=1-212"/>
</dbReference>
<dbReference type="PDB" id="7AK5">
    <property type="method" value="EM"/>
    <property type="resolution" value="3.17 A"/>
    <property type="chains" value="I=1-212"/>
</dbReference>
<dbReference type="PDB" id="7AK6">
    <property type="method" value="EM"/>
    <property type="resolution" value="3.82 A"/>
    <property type="chains" value="I=1-212"/>
</dbReference>
<dbReference type="PDB" id="7B93">
    <property type="method" value="EM"/>
    <property type="resolution" value="3.04 A"/>
    <property type="chains" value="I=1-212"/>
</dbReference>
<dbReference type="PDB" id="7PSA">
    <property type="method" value="EM"/>
    <property type="resolution" value="3.40 A"/>
    <property type="chains" value="I=1-212"/>
</dbReference>
<dbReference type="PDB" id="8C2S">
    <property type="method" value="EM"/>
    <property type="resolution" value="3.90 A"/>
    <property type="chains" value="I=1-212"/>
</dbReference>
<dbReference type="PDB" id="8CA3">
    <property type="method" value="EM"/>
    <property type="resolution" value="3.20 A"/>
    <property type="chains" value="I=1-212"/>
</dbReference>
<dbReference type="PDB" id="8CA5">
    <property type="method" value="EM"/>
    <property type="resolution" value="3.90 A"/>
    <property type="chains" value="I=1-212"/>
</dbReference>
<dbReference type="PDB" id="8IAO">
    <property type="method" value="EM"/>
    <property type="resolution" value="4.20 A"/>
    <property type="chains" value="I=1-212"/>
</dbReference>
<dbReference type="PDB" id="8IAP">
    <property type="method" value="EM"/>
    <property type="resolution" value="3.20 A"/>
    <property type="chains" value="I=1-212"/>
</dbReference>
<dbReference type="PDB" id="8IB4">
    <property type="method" value="EM"/>
    <property type="resolution" value="4.30 A"/>
    <property type="chains" value="I=1-212"/>
</dbReference>
<dbReference type="PDB" id="8IB5">
    <property type="method" value="EM"/>
    <property type="resolution" value="3.30 A"/>
    <property type="chains" value="I=1-212"/>
</dbReference>
<dbReference type="PDB" id="8IB9">
    <property type="method" value="EM"/>
    <property type="resolution" value="4.30 A"/>
    <property type="chains" value="I=1-212"/>
</dbReference>
<dbReference type="PDB" id="8IBA">
    <property type="method" value="EM"/>
    <property type="resolution" value="3.20 A"/>
    <property type="chains" value="I=1-212"/>
</dbReference>
<dbReference type="PDB" id="8IBD">
    <property type="method" value="EM"/>
    <property type="resolution" value="4.20 A"/>
    <property type="chains" value="I=1-212"/>
</dbReference>
<dbReference type="PDB" id="8IBE">
    <property type="method" value="EM"/>
    <property type="resolution" value="3.30 A"/>
    <property type="chains" value="I=1-212"/>
</dbReference>
<dbReference type="PDB" id="8IC2">
    <property type="method" value="EM"/>
    <property type="resolution" value="6.30 A"/>
    <property type="chains" value="I=1-212"/>
</dbReference>
<dbReference type="PDB" id="8IC3">
    <property type="method" value="EM"/>
    <property type="resolution" value="3.20 A"/>
    <property type="chains" value="I=1-212"/>
</dbReference>
<dbReference type="PDB" id="8OLT">
    <property type="method" value="EM"/>
    <property type="resolution" value="2.84 A"/>
    <property type="chains" value="I=1-212"/>
</dbReference>
<dbReference type="PDB" id="8OM1">
    <property type="method" value="EM"/>
    <property type="resolution" value="2.39 A"/>
    <property type="chains" value="I=1-212"/>
</dbReference>
<dbReference type="PDB" id="8PW5">
    <property type="method" value="EM"/>
    <property type="resolution" value="3.60 A"/>
    <property type="chains" value="9=1-212"/>
</dbReference>
<dbReference type="PDB" id="8PW6">
    <property type="method" value="EM"/>
    <property type="resolution" value="3.30 A"/>
    <property type="chains" value="9=1-212"/>
</dbReference>
<dbReference type="PDB" id="8PW7">
    <property type="method" value="EM"/>
    <property type="resolution" value="3.50 A"/>
    <property type="chains" value="9=1-212"/>
</dbReference>
<dbReference type="PDB" id="8RGP">
    <property type="method" value="EM"/>
    <property type="resolution" value="3.00 A"/>
    <property type="chains" value="9=1-212"/>
</dbReference>
<dbReference type="PDB" id="8RGQ">
    <property type="method" value="EM"/>
    <property type="resolution" value="3.00 A"/>
    <property type="chains" value="9=1-212"/>
</dbReference>
<dbReference type="PDB" id="8RGR">
    <property type="method" value="EM"/>
    <property type="resolution" value="2.90 A"/>
    <property type="chains" value="9=1-212"/>
</dbReference>
<dbReference type="PDB" id="8RGT">
    <property type="method" value="EM"/>
    <property type="resolution" value="3.10 A"/>
    <property type="chains" value="9=1-212"/>
</dbReference>
<dbReference type="PDB" id="8UCA">
    <property type="method" value="EM"/>
    <property type="resolution" value="3.70 A"/>
    <property type="chains" value="S8/s8=1-212"/>
</dbReference>
<dbReference type="PDB" id="8XNL">
    <property type="method" value="EM"/>
    <property type="resolution" value="3.10 A"/>
    <property type="chains" value="I=1-212"/>
</dbReference>
<dbReference type="PDB" id="8XNM">
    <property type="method" value="EM"/>
    <property type="resolution" value="3.50 A"/>
    <property type="chains" value="I=1-212"/>
</dbReference>
<dbReference type="PDB" id="8XNN">
    <property type="method" value="EM"/>
    <property type="resolution" value="3.60 A"/>
    <property type="chains" value="I=1-212"/>
</dbReference>
<dbReference type="PDB" id="8XNO">
    <property type="method" value="EM"/>
    <property type="resolution" value="3.40 A"/>
    <property type="chains" value="I=1-212"/>
</dbReference>
<dbReference type="PDB" id="8XNP">
    <property type="method" value="EM"/>
    <property type="resolution" value="3.50 A"/>
    <property type="chains" value="I=1-212"/>
</dbReference>
<dbReference type="PDB" id="8XNQ">
    <property type="method" value="EM"/>
    <property type="resolution" value="3.70 A"/>
    <property type="chains" value="I=1-212"/>
</dbReference>
<dbReference type="PDB" id="8XNR">
    <property type="method" value="EM"/>
    <property type="resolution" value="3.30 A"/>
    <property type="chains" value="I=1-212"/>
</dbReference>
<dbReference type="PDB" id="8XNS">
    <property type="method" value="EM"/>
    <property type="resolution" value="3.50 A"/>
    <property type="chains" value="I=1-212"/>
</dbReference>
<dbReference type="PDB" id="8XNT">
    <property type="method" value="EM"/>
    <property type="resolution" value="4.10 A"/>
    <property type="chains" value="I=1-212"/>
</dbReference>
<dbReference type="PDB" id="8XNU">
    <property type="method" value="EM"/>
    <property type="resolution" value="3.60 A"/>
    <property type="chains" value="I=1-212"/>
</dbReference>
<dbReference type="PDB" id="8XNV">
    <property type="method" value="EM"/>
    <property type="resolution" value="3.30 A"/>
    <property type="chains" value="I=1-212"/>
</dbReference>
<dbReference type="PDB" id="8XNW">
    <property type="method" value="EM"/>
    <property type="resolution" value="3.60 A"/>
    <property type="chains" value="I=1-212"/>
</dbReference>
<dbReference type="PDB" id="8XNX">
    <property type="method" value="EM"/>
    <property type="resolution" value="3.50 A"/>
    <property type="chains" value="I=1-212"/>
</dbReference>
<dbReference type="PDB" id="8XNY">
    <property type="method" value="EM"/>
    <property type="resolution" value="4.10 A"/>
    <property type="chains" value="I=1-212"/>
</dbReference>
<dbReference type="PDB" id="8XNZ">
    <property type="method" value="EM"/>
    <property type="resolution" value="3.30 A"/>
    <property type="chains" value="I=1-212"/>
</dbReference>
<dbReference type="PDB" id="8XO0">
    <property type="method" value="EM"/>
    <property type="resolution" value="4.20 A"/>
    <property type="chains" value="I=1-212"/>
</dbReference>
<dbReference type="PDBsum" id="6G2J"/>
<dbReference type="PDBsum" id="6G72"/>
<dbReference type="PDBsum" id="6ZR2"/>
<dbReference type="PDBsum" id="6ZTQ"/>
<dbReference type="PDBsum" id="7AK5"/>
<dbReference type="PDBsum" id="7AK6"/>
<dbReference type="PDBsum" id="7B93"/>
<dbReference type="PDBsum" id="7PSA"/>
<dbReference type="PDBsum" id="8C2S"/>
<dbReference type="PDBsum" id="8CA3"/>
<dbReference type="PDBsum" id="8CA5"/>
<dbReference type="PDBsum" id="8IAO"/>
<dbReference type="PDBsum" id="8IAP"/>
<dbReference type="PDBsum" id="8IB4"/>
<dbReference type="PDBsum" id="8IB5"/>
<dbReference type="PDBsum" id="8IB9"/>
<dbReference type="PDBsum" id="8IBA"/>
<dbReference type="PDBsum" id="8IBD"/>
<dbReference type="PDBsum" id="8IBE"/>
<dbReference type="PDBsum" id="8IC2"/>
<dbReference type="PDBsum" id="8IC3"/>
<dbReference type="PDBsum" id="8OLT"/>
<dbReference type="PDBsum" id="8OM1"/>
<dbReference type="PDBsum" id="8PW5"/>
<dbReference type="PDBsum" id="8PW6"/>
<dbReference type="PDBsum" id="8PW7"/>
<dbReference type="PDBsum" id="8RGP"/>
<dbReference type="PDBsum" id="8RGQ"/>
<dbReference type="PDBsum" id="8RGR"/>
<dbReference type="PDBsum" id="8RGT"/>
<dbReference type="PDBsum" id="8UCA"/>
<dbReference type="PDBsum" id="8XNL"/>
<dbReference type="PDBsum" id="8XNM"/>
<dbReference type="PDBsum" id="8XNN"/>
<dbReference type="PDBsum" id="8XNO"/>
<dbReference type="PDBsum" id="8XNP"/>
<dbReference type="PDBsum" id="8XNQ"/>
<dbReference type="PDBsum" id="8XNR"/>
<dbReference type="PDBsum" id="8XNS"/>
<dbReference type="PDBsum" id="8XNT"/>
<dbReference type="PDBsum" id="8XNU"/>
<dbReference type="PDBsum" id="8XNV"/>
<dbReference type="PDBsum" id="8XNW"/>
<dbReference type="PDBsum" id="8XNX"/>
<dbReference type="PDBsum" id="8XNY"/>
<dbReference type="PDBsum" id="8XNZ"/>
<dbReference type="PDBsum" id="8XO0"/>
<dbReference type="EMDB" id="EMD-11377"/>
<dbReference type="EMDB" id="EMD-11424"/>
<dbReference type="EMDB" id="EMD-11810"/>
<dbReference type="EMDB" id="EMD-11811"/>
<dbReference type="EMDB" id="EMD-12095"/>
<dbReference type="EMDB" id="EMD-13611"/>
<dbReference type="EMDB" id="EMD-16398"/>
<dbReference type="EMDB" id="EMD-16516"/>
<dbReference type="EMDB" id="EMD-16518"/>
<dbReference type="EMDB" id="EMD-16962"/>
<dbReference type="EMDB" id="EMD-16965"/>
<dbReference type="EMDB" id="EMD-17989"/>
<dbReference type="EMDB" id="EMD-17990"/>
<dbReference type="EMDB" id="EMD-17991"/>
<dbReference type="EMDB" id="EMD-19145"/>
<dbReference type="EMDB" id="EMD-19146"/>
<dbReference type="EMDB" id="EMD-19147"/>
<dbReference type="EMDB" id="EMD-19148"/>
<dbReference type="EMDB" id="EMD-35313"/>
<dbReference type="EMDB" id="EMD-35314"/>
<dbReference type="EMDB" id="EMD-35331"/>
<dbReference type="EMDB" id="EMD-35332"/>
<dbReference type="EMDB" id="EMD-35336"/>
<dbReference type="EMDB" id="EMD-35337"/>
<dbReference type="EMDB" id="EMD-35340"/>
<dbReference type="EMDB" id="EMD-35341"/>
<dbReference type="EMDB" id="EMD-35352"/>
<dbReference type="EMDB" id="EMD-35353"/>
<dbReference type="EMDB" id="EMD-38506"/>
<dbReference type="EMDB" id="EMD-38507"/>
<dbReference type="EMDB" id="EMD-38508"/>
<dbReference type="EMDB" id="EMD-38509"/>
<dbReference type="EMDB" id="EMD-38510"/>
<dbReference type="EMDB" id="EMD-38511"/>
<dbReference type="EMDB" id="EMD-38512"/>
<dbReference type="EMDB" id="EMD-38513"/>
<dbReference type="EMDB" id="EMD-38514"/>
<dbReference type="EMDB" id="EMD-38515"/>
<dbReference type="EMDB" id="EMD-38516"/>
<dbReference type="EMDB" id="EMD-38517"/>
<dbReference type="EMDB" id="EMD-38518"/>
<dbReference type="EMDB" id="EMD-38519"/>
<dbReference type="EMDB" id="EMD-38520"/>
<dbReference type="EMDB" id="EMD-38521"/>
<dbReference type="EMDB" id="EMD-42122"/>
<dbReference type="EMDB" id="EMD-4345"/>
<dbReference type="EMDB" id="EMD-4356"/>
<dbReference type="SMR" id="Q8K3J1"/>
<dbReference type="BioGRID" id="230440">
    <property type="interactions" value="6"/>
</dbReference>
<dbReference type="ComplexPortal" id="CPX-266">
    <property type="entry name" value="Mitochondrial respiratory chain complex I"/>
</dbReference>
<dbReference type="CORUM" id="Q8K3J1"/>
<dbReference type="FunCoup" id="Q8K3J1">
    <property type="interactions" value="2351"/>
</dbReference>
<dbReference type="IntAct" id="Q8K3J1">
    <property type="interactions" value="4"/>
</dbReference>
<dbReference type="STRING" id="10090.ENSMUSP00000158541"/>
<dbReference type="GlyGen" id="Q8K3J1">
    <property type="glycosylation" value="2 sites, 1 O-linked glycan (2 sites)"/>
</dbReference>
<dbReference type="iPTMnet" id="Q8K3J1"/>
<dbReference type="PhosphoSitePlus" id="Q8K3J1"/>
<dbReference type="SwissPalm" id="Q8K3J1"/>
<dbReference type="REPRODUCTION-2DPAGE" id="Q8K3J1"/>
<dbReference type="jPOST" id="Q8K3J1"/>
<dbReference type="PaxDb" id="10090-ENSMUSP00000074600"/>
<dbReference type="ProteomicsDB" id="293648"/>
<dbReference type="Pumba" id="Q8K3J1"/>
<dbReference type="Antibodypedia" id="1263">
    <property type="antibodies" value="261 antibodies from 33 providers"/>
</dbReference>
<dbReference type="DNASU" id="225887"/>
<dbReference type="Ensembl" id="ENSMUST00000075092.8">
    <property type="protein sequence ID" value="ENSMUSP00000074600.7"/>
    <property type="gene ID" value="ENSMUSG00000059734.8"/>
</dbReference>
<dbReference type="Ensembl" id="ENSMUST00000235847.2">
    <property type="protein sequence ID" value="ENSMUSP00000158029.2"/>
    <property type="gene ID" value="ENSMUSG00000059734.8"/>
</dbReference>
<dbReference type="Ensembl" id="ENSMUST00000236801.2">
    <property type="protein sequence ID" value="ENSMUSP00000158541.2"/>
    <property type="gene ID" value="ENSMUSG00000059734.8"/>
</dbReference>
<dbReference type="Ensembl" id="ENSMUST00000237341.2">
    <property type="protein sequence ID" value="ENSMUSP00000158327.2"/>
    <property type="gene ID" value="ENSMUSG00000059734.8"/>
</dbReference>
<dbReference type="GeneID" id="225887"/>
<dbReference type="KEGG" id="mmu:225887"/>
<dbReference type="UCSC" id="uc008fxn.2">
    <property type="organism name" value="mouse"/>
</dbReference>
<dbReference type="AGR" id="MGI:2385079"/>
<dbReference type="CTD" id="4728"/>
<dbReference type="MGI" id="MGI:2385079">
    <property type="gene designation" value="Ndufs8"/>
</dbReference>
<dbReference type="VEuPathDB" id="HostDB:ENSMUSG00000059734"/>
<dbReference type="eggNOG" id="KOG3256">
    <property type="taxonomic scope" value="Eukaryota"/>
</dbReference>
<dbReference type="GeneTree" id="ENSGT00390000003049"/>
<dbReference type="HOGENOM" id="CLU_067218_5_1_1"/>
<dbReference type="InParanoid" id="Q8K3J1"/>
<dbReference type="OMA" id="CMEMYFR"/>
<dbReference type="OrthoDB" id="204405at2759"/>
<dbReference type="PhylomeDB" id="Q8K3J1"/>
<dbReference type="TreeFam" id="TF105610"/>
<dbReference type="Reactome" id="R-MMU-611105">
    <property type="pathway name" value="Respiratory electron transport"/>
</dbReference>
<dbReference type="Reactome" id="R-MMU-6799198">
    <property type="pathway name" value="Complex I biogenesis"/>
</dbReference>
<dbReference type="BioGRID-ORCS" id="225887">
    <property type="hits" value="24 hits in 80 CRISPR screens"/>
</dbReference>
<dbReference type="ChiTaRS" id="Ndufs8">
    <property type="organism name" value="mouse"/>
</dbReference>
<dbReference type="PRO" id="PR:Q8K3J1"/>
<dbReference type="Proteomes" id="UP000000589">
    <property type="component" value="Chromosome 19"/>
</dbReference>
<dbReference type="RNAct" id="Q8K3J1">
    <property type="molecule type" value="protein"/>
</dbReference>
<dbReference type="Bgee" id="ENSMUSG00000059734">
    <property type="expression patterns" value="Expressed in interventricular septum and 245 other cell types or tissues"/>
</dbReference>
<dbReference type="ExpressionAtlas" id="Q8K3J1">
    <property type="expression patterns" value="baseline and differential"/>
</dbReference>
<dbReference type="GO" id="GO:0005743">
    <property type="term" value="C:mitochondrial inner membrane"/>
    <property type="evidence" value="ECO:0000314"/>
    <property type="project" value="UniProtKB"/>
</dbReference>
<dbReference type="GO" id="GO:0005739">
    <property type="term" value="C:mitochondrion"/>
    <property type="evidence" value="ECO:0007005"/>
    <property type="project" value="MGI"/>
</dbReference>
<dbReference type="GO" id="GO:0045271">
    <property type="term" value="C:respiratory chain complex I"/>
    <property type="evidence" value="ECO:0000314"/>
    <property type="project" value="UniProtKB"/>
</dbReference>
<dbReference type="GO" id="GO:0051539">
    <property type="term" value="F:4 iron, 4 sulfur cluster binding"/>
    <property type="evidence" value="ECO:0007669"/>
    <property type="project" value="UniProtKB-KW"/>
</dbReference>
<dbReference type="GO" id="GO:0046872">
    <property type="term" value="F:metal ion binding"/>
    <property type="evidence" value="ECO:0007669"/>
    <property type="project" value="UniProtKB-KW"/>
</dbReference>
<dbReference type="GO" id="GO:0008137">
    <property type="term" value="F:NADH dehydrogenase (ubiquinone) activity"/>
    <property type="evidence" value="ECO:0000250"/>
    <property type="project" value="UniProtKB"/>
</dbReference>
<dbReference type="GO" id="GO:0009060">
    <property type="term" value="P:aerobic respiration"/>
    <property type="evidence" value="ECO:0000303"/>
    <property type="project" value="ComplexPortal"/>
</dbReference>
<dbReference type="GO" id="GO:0006120">
    <property type="term" value="P:mitochondrial electron transport, NADH to ubiquinone"/>
    <property type="evidence" value="ECO:0000250"/>
    <property type="project" value="UniProtKB"/>
</dbReference>
<dbReference type="GO" id="GO:0032981">
    <property type="term" value="P:mitochondrial respiratory chain complex I assembly"/>
    <property type="evidence" value="ECO:0000250"/>
    <property type="project" value="UniProtKB"/>
</dbReference>
<dbReference type="GO" id="GO:0042776">
    <property type="term" value="P:proton motive force-driven mitochondrial ATP synthesis"/>
    <property type="evidence" value="ECO:0000303"/>
    <property type="project" value="ComplexPortal"/>
</dbReference>
<dbReference type="FunFam" id="3.30.70.3270:FF:000001">
    <property type="entry name" value="NADH-quinone oxidoreductase subunit I 1"/>
    <property type="match status" value="1"/>
</dbReference>
<dbReference type="Gene3D" id="3.30.70.3270">
    <property type="match status" value="1"/>
</dbReference>
<dbReference type="HAMAP" id="MF_01351">
    <property type="entry name" value="NDH1_NuoI"/>
    <property type="match status" value="1"/>
</dbReference>
<dbReference type="InterPro" id="IPR017896">
    <property type="entry name" value="4Fe4S_Fe-S-bd"/>
</dbReference>
<dbReference type="InterPro" id="IPR017900">
    <property type="entry name" value="4Fe4S_Fe_S_CS"/>
</dbReference>
<dbReference type="InterPro" id="IPR010226">
    <property type="entry name" value="NADH_quinone_OxRdtase_chainI"/>
</dbReference>
<dbReference type="NCBIfam" id="TIGR01971">
    <property type="entry name" value="NuoI"/>
    <property type="match status" value="1"/>
</dbReference>
<dbReference type="NCBIfam" id="NF004538">
    <property type="entry name" value="PRK05888.1-4"/>
    <property type="match status" value="1"/>
</dbReference>
<dbReference type="NCBIfam" id="NF004539">
    <property type="entry name" value="PRK05888.1-5"/>
    <property type="match status" value="1"/>
</dbReference>
<dbReference type="PANTHER" id="PTHR10849:SF20">
    <property type="entry name" value="NADH DEHYDROGENASE [UBIQUINONE] IRON-SULFUR PROTEIN 8, MITOCHONDRIAL"/>
    <property type="match status" value="1"/>
</dbReference>
<dbReference type="PANTHER" id="PTHR10849">
    <property type="entry name" value="NADH DEHYDROGENASE UBIQUINONE IRON-SULFUR PROTEIN 8, MITOCHONDRIAL"/>
    <property type="match status" value="1"/>
</dbReference>
<dbReference type="Pfam" id="PF12838">
    <property type="entry name" value="Fer4_7"/>
    <property type="match status" value="1"/>
</dbReference>
<dbReference type="SUPFAM" id="SSF54862">
    <property type="entry name" value="4Fe-4S ferredoxins"/>
    <property type="match status" value="1"/>
</dbReference>
<dbReference type="PROSITE" id="PS00198">
    <property type="entry name" value="4FE4S_FER_1"/>
    <property type="match status" value="2"/>
</dbReference>
<dbReference type="PROSITE" id="PS51379">
    <property type="entry name" value="4FE4S_FER_2"/>
    <property type="match status" value="2"/>
</dbReference>
<accession>Q8K3J1</accession>
<proteinExistence type="evidence at protein level"/>
<protein>
    <recommendedName>
        <fullName>NADH dehydrogenase [ubiquinone] iron-sulfur protein 8, mitochondrial</fullName>
        <ecNumber evidence="1">7.1.1.2</ecNumber>
    </recommendedName>
    <alternativeName>
        <fullName>Complex I-23kD</fullName>
        <shortName>CI-23kD</shortName>
    </alternativeName>
    <alternativeName>
        <fullName>NADH-ubiquinone oxidoreductase 23 kDa subunit</fullName>
    </alternativeName>
</protein>
<evidence type="ECO:0000250" key="1">
    <source>
        <dbReference type="UniProtKB" id="O00217"/>
    </source>
</evidence>
<evidence type="ECO:0000250" key="2">
    <source>
        <dbReference type="UniProtKB" id="P42028"/>
    </source>
</evidence>
<evidence type="ECO:0000255" key="3"/>
<evidence type="ECO:0000255" key="4">
    <source>
        <dbReference type="PROSITE-ProRule" id="PRU00711"/>
    </source>
</evidence>
<evidence type="ECO:0000269" key="5">
    <source>
    </source>
</evidence>
<evidence type="ECO:0000269" key="6">
    <source>
    </source>
</evidence>
<evidence type="ECO:0000305" key="7"/>
<evidence type="ECO:0007744" key="8">
    <source>
        <dbReference type="PDB" id="8PW5"/>
    </source>
</evidence>
<evidence type="ECO:0007829" key="9">
    <source>
        <dbReference type="PDB" id="6G2J"/>
    </source>
</evidence>
<evidence type="ECO:0007829" key="10">
    <source>
        <dbReference type="PDB" id="6ZTQ"/>
    </source>
</evidence>
<evidence type="ECO:0007829" key="11">
    <source>
        <dbReference type="PDB" id="8IBE"/>
    </source>
</evidence>
<evidence type="ECO:0007829" key="12">
    <source>
        <dbReference type="PDB" id="8OM1"/>
    </source>
</evidence>
<name>NDUS8_MOUSE</name>
<gene>
    <name type="primary">Ndufs8</name>
</gene>